<reference key="1">
    <citation type="journal article" date="2003" name="Nature">
        <title>The genome sequence of Bacillus anthracis Ames and comparison to closely related bacteria.</title>
        <authorList>
            <person name="Read T.D."/>
            <person name="Peterson S.N."/>
            <person name="Tourasse N.J."/>
            <person name="Baillie L.W."/>
            <person name="Paulsen I.T."/>
            <person name="Nelson K.E."/>
            <person name="Tettelin H."/>
            <person name="Fouts D.E."/>
            <person name="Eisen J.A."/>
            <person name="Gill S.R."/>
            <person name="Holtzapple E.K."/>
            <person name="Okstad O.A."/>
            <person name="Helgason E."/>
            <person name="Rilstone J."/>
            <person name="Wu M."/>
            <person name="Kolonay J.F."/>
            <person name="Beanan M.J."/>
            <person name="Dodson R.J."/>
            <person name="Brinkac L.M."/>
            <person name="Gwinn M.L."/>
            <person name="DeBoy R.T."/>
            <person name="Madpu R."/>
            <person name="Daugherty S.C."/>
            <person name="Durkin A.S."/>
            <person name="Haft D.H."/>
            <person name="Nelson W.C."/>
            <person name="Peterson J.D."/>
            <person name="Pop M."/>
            <person name="Khouri H.M."/>
            <person name="Radune D."/>
            <person name="Benton J.L."/>
            <person name="Mahamoud Y."/>
            <person name="Jiang L."/>
            <person name="Hance I.R."/>
            <person name="Weidman J.F."/>
            <person name="Berry K.J."/>
            <person name="Plaut R.D."/>
            <person name="Wolf A.M."/>
            <person name="Watkins K.L."/>
            <person name="Nierman W.C."/>
            <person name="Hazen A."/>
            <person name="Cline R.T."/>
            <person name="Redmond C."/>
            <person name="Thwaite J.E."/>
            <person name="White O."/>
            <person name="Salzberg S.L."/>
            <person name="Thomason B."/>
            <person name="Friedlander A.M."/>
            <person name="Koehler T.M."/>
            <person name="Hanna P.C."/>
            <person name="Kolstoe A.-B."/>
            <person name="Fraser C.M."/>
        </authorList>
    </citation>
    <scope>NUCLEOTIDE SEQUENCE [LARGE SCALE GENOMIC DNA]</scope>
    <source>
        <strain>Ames / isolate Porton</strain>
    </source>
</reference>
<reference key="2">
    <citation type="journal article" date="2009" name="J. Bacteriol.">
        <title>The complete genome sequence of Bacillus anthracis Ames 'Ancestor'.</title>
        <authorList>
            <person name="Ravel J."/>
            <person name="Jiang L."/>
            <person name="Stanley S.T."/>
            <person name="Wilson M.R."/>
            <person name="Decker R.S."/>
            <person name="Read T.D."/>
            <person name="Worsham P."/>
            <person name="Keim P.S."/>
            <person name="Salzberg S.L."/>
            <person name="Fraser-Liggett C.M."/>
            <person name="Rasko D.A."/>
        </authorList>
    </citation>
    <scope>NUCLEOTIDE SEQUENCE [LARGE SCALE GENOMIC DNA]</scope>
    <source>
        <strain>Ames ancestor</strain>
    </source>
</reference>
<reference key="3">
    <citation type="submission" date="2004-01" db="EMBL/GenBank/DDBJ databases">
        <title>Complete genome sequence of Bacillus anthracis Sterne.</title>
        <authorList>
            <person name="Brettin T.S."/>
            <person name="Bruce D."/>
            <person name="Challacombe J.F."/>
            <person name="Gilna P."/>
            <person name="Han C."/>
            <person name="Hill K."/>
            <person name="Hitchcock P."/>
            <person name="Jackson P."/>
            <person name="Keim P."/>
            <person name="Longmire J."/>
            <person name="Lucas S."/>
            <person name="Okinaka R."/>
            <person name="Richardson P."/>
            <person name="Rubin E."/>
            <person name="Tice H."/>
        </authorList>
    </citation>
    <scope>NUCLEOTIDE SEQUENCE [LARGE SCALE GENOMIC DNA]</scope>
    <source>
        <strain>Sterne</strain>
    </source>
</reference>
<proteinExistence type="inferred from homology"/>
<protein>
    <recommendedName>
        <fullName evidence="1">Thiamine-phosphate synthase</fullName>
        <shortName evidence="1">TP synthase</shortName>
        <shortName evidence="1">TPS</shortName>
        <ecNumber evidence="1">2.5.1.3</ecNumber>
    </recommendedName>
    <alternativeName>
        <fullName evidence="1">Thiamine-phosphate pyrophosphorylase</fullName>
        <shortName evidence="1">TMP pyrophosphorylase</shortName>
        <shortName evidence="1">TMP-PPase</shortName>
    </alternativeName>
</protein>
<gene>
    <name evidence="1" type="primary">thiE</name>
    <name type="ordered locus">BA_0377</name>
    <name type="ordered locus">GBAA_0377</name>
    <name type="ordered locus">BAS0363</name>
</gene>
<evidence type="ECO:0000255" key="1">
    <source>
        <dbReference type="HAMAP-Rule" id="MF_00097"/>
    </source>
</evidence>
<feature type="chain" id="PRO_0000156991" description="Thiamine-phosphate synthase">
    <location>
        <begin position="1"/>
        <end position="219"/>
    </location>
</feature>
<feature type="binding site" evidence="1">
    <location>
        <begin position="44"/>
        <end position="48"/>
    </location>
    <ligand>
        <name>4-amino-2-methyl-5-(diphosphooxymethyl)pyrimidine</name>
        <dbReference type="ChEBI" id="CHEBI:57841"/>
    </ligand>
</feature>
<feature type="binding site" evidence="1">
    <location>
        <position position="79"/>
    </location>
    <ligand>
        <name>4-amino-2-methyl-5-(diphosphooxymethyl)pyrimidine</name>
        <dbReference type="ChEBI" id="CHEBI:57841"/>
    </ligand>
</feature>
<feature type="binding site" evidence="1">
    <location>
        <position position="80"/>
    </location>
    <ligand>
        <name>Mg(2+)</name>
        <dbReference type="ChEBI" id="CHEBI:18420"/>
    </ligand>
</feature>
<feature type="binding site" evidence="1">
    <location>
        <position position="99"/>
    </location>
    <ligand>
        <name>Mg(2+)</name>
        <dbReference type="ChEBI" id="CHEBI:18420"/>
    </ligand>
</feature>
<feature type="binding site" evidence="1">
    <location>
        <position position="117"/>
    </location>
    <ligand>
        <name>4-amino-2-methyl-5-(diphosphooxymethyl)pyrimidine</name>
        <dbReference type="ChEBI" id="CHEBI:57841"/>
    </ligand>
</feature>
<feature type="binding site" evidence="1">
    <location>
        <begin position="143"/>
        <end position="145"/>
    </location>
    <ligand>
        <name>2-[(2R,5Z)-2-carboxy-4-methylthiazol-5(2H)-ylidene]ethyl phosphate</name>
        <dbReference type="ChEBI" id="CHEBI:62899"/>
    </ligand>
</feature>
<feature type="binding site" evidence="1">
    <location>
        <position position="146"/>
    </location>
    <ligand>
        <name>4-amino-2-methyl-5-(diphosphooxymethyl)pyrimidine</name>
        <dbReference type="ChEBI" id="CHEBI:57841"/>
    </ligand>
</feature>
<feature type="binding site" evidence="1">
    <location>
        <position position="175"/>
    </location>
    <ligand>
        <name>2-[(2R,5Z)-2-carboxy-4-methylthiazol-5(2H)-ylidene]ethyl phosphate</name>
        <dbReference type="ChEBI" id="CHEBI:62899"/>
    </ligand>
</feature>
<feature type="binding site" evidence="1">
    <location>
        <begin position="195"/>
        <end position="196"/>
    </location>
    <ligand>
        <name>2-[(2R,5Z)-2-carboxy-4-methylthiazol-5(2H)-ylidene]ethyl phosphate</name>
        <dbReference type="ChEBI" id="CHEBI:62899"/>
    </ligand>
</feature>
<accession>Q81Z95</accession>
<accession>Q6I437</accession>
<accession>Q6KXU7</accession>
<comment type="function">
    <text evidence="1">Condenses 4-methyl-5-(beta-hydroxyethyl)thiazole monophosphate (THZ-P) and 2-methyl-4-amino-5-hydroxymethyl pyrimidine pyrophosphate (HMP-PP) to form thiamine monophosphate (TMP).</text>
</comment>
<comment type="catalytic activity">
    <reaction evidence="1">
        <text>2-[(2R,5Z)-2-carboxy-4-methylthiazol-5(2H)-ylidene]ethyl phosphate + 4-amino-2-methyl-5-(diphosphooxymethyl)pyrimidine + 2 H(+) = thiamine phosphate + CO2 + diphosphate</text>
        <dbReference type="Rhea" id="RHEA:47844"/>
        <dbReference type="ChEBI" id="CHEBI:15378"/>
        <dbReference type="ChEBI" id="CHEBI:16526"/>
        <dbReference type="ChEBI" id="CHEBI:33019"/>
        <dbReference type="ChEBI" id="CHEBI:37575"/>
        <dbReference type="ChEBI" id="CHEBI:57841"/>
        <dbReference type="ChEBI" id="CHEBI:62899"/>
        <dbReference type="EC" id="2.5.1.3"/>
    </reaction>
</comment>
<comment type="catalytic activity">
    <reaction evidence="1">
        <text>2-(2-carboxy-4-methylthiazol-5-yl)ethyl phosphate + 4-amino-2-methyl-5-(diphosphooxymethyl)pyrimidine + 2 H(+) = thiamine phosphate + CO2 + diphosphate</text>
        <dbReference type="Rhea" id="RHEA:47848"/>
        <dbReference type="ChEBI" id="CHEBI:15378"/>
        <dbReference type="ChEBI" id="CHEBI:16526"/>
        <dbReference type="ChEBI" id="CHEBI:33019"/>
        <dbReference type="ChEBI" id="CHEBI:37575"/>
        <dbReference type="ChEBI" id="CHEBI:57841"/>
        <dbReference type="ChEBI" id="CHEBI:62890"/>
        <dbReference type="EC" id="2.5.1.3"/>
    </reaction>
</comment>
<comment type="catalytic activity">
    <reaction evidence="1">
        <text>4-methyl-5-(2-phosphooxyethyl)-thiazole + 4-amino-2-methyl-5-(diphosphooxymethyl)pyrimidine + H(+) = thiamine phosphate + diphosphate</text>
        <dbReference type="Rhea" id="RHEA:22328"/>
        <dbReference type="ChEBI" id="CHEBI:15378"/>
        <dbReference type="ChEBI" id="CHEBI:33019"/>
        <dbReference type="ChEBI" id="CHEBI:37575"/>
        <dbReference type="ChEBI" id="CHEBI:57841"/>
        <dbReference type="ChEBI" id="CHEBI:58296"/>
        <dbReference type="EC" id="2.5.1.3"/>
    </reaction>
</comment>
<comment type="cofactor">
    <cofactor evidence="1">
        <name>Mg(2+)</name>
        <dbReference type="ChEBI" id="CHEBI:18420"/>
    </cofactor>
    <text evidence="1">Binds 1 Mg(2+) ion per subunit.</text>
</comment>
<comment type="pathway">
    <text evidence="1">Cofactor biosynthesis; thiamine diphosphate biosynthesis; thiamine phosphate from 4-amino-2-methyl-5-diphosphomethylpyrimidine and 4-methyl-5-(2-phosphoethyl)-thiazole: step 1/1.</text>
</comment>
<comment type="similarity">
    <text evidence="1">Belongs to the thiamine-phosphate synthase family.</text>
</comment>
<organism>
    <name type="scientific">Bacillus anthracis</name>
    <dbReference type="NCBI Taxonomy" id="1392"/>
    <lineage>
        <taxon>Bacteria</taxon>
        <taxon>Bacillati</taxon>
        <taxon>Bacillota</taxon>
        <taxon>Bacilli</taxon>
        <taxon>Bacillales</taxon>
        <taxon>Bacillaceae</taxon>
        <taxon>Bacillus</taxon>
        <taxon>Bacillus cereus group</taxon>
    </lineage>
</organism>
<name>THIE_BACAN</name>
<keyword id="KW-0460">Magnesium</keyword>
<keyword id="KW-0479">Metal-binding</keyword>
<keyword id="KW-1185">Reference proteome</keyword>
<keyword id="KW-0784">Thiamine biosynthesis</keyword>
<keyword id="KW-0808">Transferase</keyword>
<sequence>MSRISKAEMSKLLSVYFIMGSNNCTKDPLQVLREALEGFITIFQFREKGEGALTGEERICFAKELQAICKEYGVPFIVNDDVELALELDADGVHVGQDDEGITSVREKMGDKIVGVSTHTIEEARWVIENGADYLGVGPIFPTSTKKDTKAVQGTKGLAHFREQGITIPIVGIGGISIENTASVIEAGADGVSVISAISLAESAYESTKKLVEEVSRSL</sequence>
<dbReference type="EC" id="2.5.1.3" evidence="1"/>
<dbReference type="EMBL" id="AE016879">
    <property type="protein sequence ID" value="AAP24407.1"/>
    <property type="molecule type" value="Genomic_DNA"/>
</dbReference>
<dbReference type="EMBL" id="AE017334">
    <property type="protein sequence ID" value="AAT29472.1"/>
    <property type="molecule type" value="Genomic_DNA"/>
</dbReference>
<dbReference type="EMBL" id="AE017225">
    <property type="protein sequence ID" value="AAT52694.1"/>
    <property type="molecule type" value="Genomic_DNA"/>
</dbReference>
<dbReference type="RefSeq" id="NP_842921.1">
    <property type="nucleotide sequence ID" value="NC_003997.3"/>
</dbReference>
<dbReference type="RefSeq" id="WP_000086975.1">
    <property type="nucleotide sequence ID" value="NZ_WXXJ01000026.1"/>
</dbReference>
<dbReference type="RefSeq" id="YP_026643.1">
    <property type="nucleotide sequence ID" value="NC_005945.1"/>
</dbReference>
<dbReference type="SMR" id="Q81Z95"/>
<dbReference type="IntAct" id="Q81Z95">
    <property type="interactions" value="1"/>
</dbReference>
<dbReference type="STRING" id="261594.GBAA_0377"/>
<dbReference type="DNASU" id="1084546"/>
<dbReference type="GeneID" id="45020436"/>
<dbReference type="KEGG" id="ban:BA_0377"/>
<dbReference type="KEGG" id="banh:HYU01_02040"/>
<dbReference type="KEGG" id="bar:GBAA_0377"/>
<dbReference type="KEGG" id="bat:BAS0363"/>
<dbReference type="PATRIC" id="fig|198094.11.peg.372"/>
<dbReference type="eggNOG" id="COG0352">
    <property type="taxonomic scope" value="Bacteria"/>
</dbReference>
<dbReference type="HOGENOM" id="CLU_018272_3_2_9"/>
<dbReference type="OMA" id="QDFYHIK"/>
<dbReference type="OrthoDB" id="9812206at2"/>
<dbReference type="UniPathway" id="UPA00060">
    <property type="reaction ID" value="UER00141"/>
</dbReference>
<dbReference type="Proteomes" id="UP000000427">
    <property type="component" value="Chromosome"/>
</dbReference>
<dbReference type="Proteomes" id="UP000000594">
    <property type="component" value="Chromosome"/>
</dbReference>
<dbReference type="GO" id="GO:0005737">
    <property type="term" value="C:cytoplasm"/>
    <property type="evidence" value="ECO:0007669"/>
    <property type="project" value="TreeGrafter"/>
</dbReference>
<dbReference type="GO" id="GO:0000287">
    <property type="term" value="F:magnesium ion binding"/>
    <property type="evidence" value="ECO:0007669"/>
    <property type="project" value="UniProtKB-UniRule"/>
</dbReference>
<dbReference type="GO" id="GO:0004789">
    <property type="term" value="F:thiamine-phosphate diphosphorylase activity"/>
    <property type="evidence" value="ECO:0007669"/>
    <property type="project" value="UniProtKB-UniRule"/>
</dbReference>
<dbReference type="GO" id="GO:0009228">
    <property type="term" value="P:thiamine biosynthetic process"/>
    <property type="evidence" value="ECO:0007669"/>
    <property type="project" value="UniProtKB-KW"/>
</dbReference>
<dbReference type="GO" id="GO:0009229">
    <property type="term" value="P:thiamine diphosphate biosynthetic process"/>
    <property type="evidence" value="ECO:0007669"/>
    <property type="project" value="UniProtKB-UniRule"/>
</dbReference>
<dbReference type="CDD" id="cd00564">
    <property type="entry name" value="TMP_TenI"/>
    <property type="match status" value="1"/>
</dbReference>
<dbReference type="FunFam" id="3.20.20.70:FF:000096">
    <property type="entry name" value="Thiamine-phosphate synthase"/>
    <property type="match status" value="1"/>
</dbReference>
<dbReference type="Gene3D" id="3.20.20.70">
    <property type="entry name" value="Aldolase class I"/>
    <property type="match status" value="1"/>
</dbReference>
<dbReference type="HAMAP" id="MF_00097">
    <property type="entry name" value="TMP_synthase"/>
    <property type="match status" value="1"/>
</dbReference>
<dbReference type="InterPro" id="IPR013785">
    <property type="entry name" value="Aldolase_TIM"/>
</dbReference>
<dbReference type="InterPro" id="IPR036206">
    <property type="entry name" value="ThiamineP_synth_sf"/>
</dbReference>
<dbReference type="InterPro" id="IPR022998">
    <property type="entry name" value="ThiamineP_synth_TenI"/>
</dbReference>
<dbReference type="InterPro" id="IPR034291">
    <property type="entry name" value="TMP_synthase"/>
</dbReference>
<dbReference type="NCBIfam" id="TIGR00693">
    <property type="entry name" value="thiE"/>
    <property type="match status" value="1"/>
</dbReference>
<dbReference type="PANTHER" id="PTHR20857">
    <property type="entry name" value="THIAMINE-PHOSPHATE PYROPHOSPHORYLASE"/>
    <property type="match status" value="1"/>
</dbReference>
<dbReference type="PANTHER" id="PTHR20857:SF15">
    <property type="entry name" value="THIAMINE-PHOSPHATE SYNTHASE"/>
    <property type="match status" value="1"/>
</dbReference>
<dbReference type="Pfam" id="PF02581">
    <property type="entry name" value="TMP-TENI"/>
    <property type="match status" value="1"/>
</dbReference>
<dbReference type="SUPFAM" id="SSF51391">
    <property type="entry name" value="Thiamin phosphate synthase"/>
    <property type="match status" value="1"/>
</dbReference>